<reference key="1">
    <citation type="journal article" date="1989" name="J. Mol. Biol.">
        <title>Genomic organization of the glyceraldehyde-3-phosphate dehydrogenase gene family of Caenorhabditis elegans.</title>
        <authorList>
            <person name="Huang X.Y."/>
            <person name="Barrios L.A.M."/>
            <person name="Vonkhorporn P."/>
            <person name="Honda S."/>
            <person name="Albertson D.G."/>
            <person name="Hecht R.M."/>
        </authorList>
    </citation>
    <scope>NUCLEOTIDE SEQUENCE [GENOMIC DNA]</scope>
    <source>
        <strain>Bristol N2</strain>
    </source>
</reference>
<reference key="2">
    <citation type="journal article" date="1998" name="Science">
        <title>Genome sequence of the nematode C. elegans: a platform for investigating biology.</title>
        <authorList>
            <consortium name="The C. elegans sequencing consortium"/>
        </authorList>
    </citation>
    <scope>NUCLEOTIDE SEQUENCE [LARGE SCALE GENOMIC DNA]</scope>
    <source>
        <strain>Bristol N2</strain>
    </source>
</reference>
<accession>P17330</accession>
<dbReference type="EC" id="1.2.1.12"/>
<dbReference type="EMBL" id="X15254">
    <property type="protein sequence ID" value="CAA33327.1"/>
    <property type="molecule type" value="Genomic_DNA"/>
</dbReference>
<dbReference type="EMBL" id="FO080552">
    <property type="protein sequence ID" value="CCD64599.1"/>
    <property type="molecule type" value="Genomic_DNA"/>
</dbReference>
<dbReference type="PIR" id="S03914">
    <property type="entry name" value="DEKWG3"/>
</dbReference>
<dbReference type="RefSeq" id="NP_508534.3">
    <property type="nucleotide sequence ID" value="NM_076133.5"/>
</dbReference>
<dbReference type="SMR" id="P17330"/>
<dbReference type="BioGRID" id="45544">
    <property type="interactions" value="27"/>
</dbReference>
<dbReference type="DIP" id="DIP-26747N"/>
<dbReference type="FunCoup" id="P17330">
    <property type="interactions" value="489"/>
</dbReference>
<dbReference type="IntAct" id="P17330">
    <property type="interactions" value="4"/>
</dbReference>
<dbReference type="MINT" id="P17330"/>
<dbReference type="STRING" id="6239.K10B3.7.2"/>
<dbReference type="PaxDb" id="6239-K10B3.7.1"/>
<dbReference type="PeptideAtlas" id="P17330"/>
<dbReference type="EnsemblMetazoa" id="K10B3.7.1">
    <property type="protein sequence ID" value="K10B3.7.1"/>
    <property type="gene ID" value="WBGene00001685"/>
</dbReference>
<dbReference type="GeneID" id="180601"/>
<dbReference type="KEGG" id="cel:CELE_K10B3.7"/>
<dbReference type="UCSC" id="K10B3.7.1">
    <property type="organism name" value="c. elegans"/>
</dbReference>
<dbReference type="AGR" id="WB:WBGene00001685"/>
<dbReference type="CTD" id="180601"/>
<dbReference type="WormBase" id="K10B3.7">
    <property type="protein sequence ID" value="CE07370"/>
    <property type="gene ID" value="WBGene00001685"/>
    <property type="gene designation" value="gpd-3"/>
</dbReference>
<dbReference type="eggNOG" id="KOG0657">
    <property type="taxonomic scope" value="Eukaryota"/>
</dbReference>
<dbReference type="GeneTree" id="ENSGT00940000153298"/>
<dbReference type="HOGENOM" id="CLU_030140_0_3_1"/>
<dbReference type="InParanoid" id="P17330"/>
<dbReference type="OMA" id="YVQITTI"/>
<dbReference type="OrthoDB" id="1152826at2759"/>
<dbReference type="PhylomeDB" id="P17330"/>
<dbReference type="Reactome" id="R-CEL-70171">
    <property type="pathway name" value="Glycolysis"/>
</dbReference>
<dbReference type="Reactome" id="R-CEL-70263">
    <property type="pathway name" value="Gluconeogenesis"/>
</dbReference>
<dbReference type="SignaLink" id="P17330"/>
<dbReference type="UniPathway" id="UPA00109">
    <property type="reaction ID" value="UER00184"/>
</dbReference>
<dbReference type="PRO" id="PR:P17330"/>
<dbReference type="Proteomes" id="UP000001940">
    <property type="component" value="Chromosome X"/>
</dbReference>
<dbReference type="GO" id="GO:0005829">
    <property type="term" value="C:cytosol"/>
    <property type="evidence" value="ECO:0000318"/>
    <property type="project" value="GO_Central"/>
</dbReference>
<dbReference type="GO" id="GO:0004365">
    <property type="term" value="F:glyceraldehyde-3-phosphate dehydrogenase (NAD+) (phosphorylating) activity"/>
    <property type="evidence" value="ECO:0000318"/>
    <property type="project" value="GO_Central"/>
</dbReference>
<dbReference type="GO" id="GO:0051287">
    <property type="term" value="F:NAD binding"/>
    <property type="evidence" value="ECO:0007669"/>
    <property type="project" value="InterPro"/>
</dbReference>
<dbReference type="GO" id="GO:0050661">
    <property type="term" value="F:NADP binding"/>
    <property type="evidence" value="ECO:0007669"/>
    <property type="project" value="InterPro"/>
</dbReference>
<dbReference type="GO" id="GO:0006006">
    <property type="term" value="P:glucose metabolic process"/>
    <property type="evidence" value="ECO:0007669"/>
    <property type="project" value="InterPro"/>
</dbReference>
<dbReference type="GO" id="GO:0006096">
    <property type="term" value="P:glycolytic process"/>
    <property type="evidence" value="ECO:0000318"/>
    <property type="project" value="GO_Central"/>
</dbReference>
<dbReference type="CDD" id="cd18126">
    <property type="entry name" value="GAPDH_I_C"/>
    <property type="match status" value="1"/>
</dbReference>
<dbReference type="CDD" id="cd05214">
    <property type="entry name" value="GAPDH_I_N"/>
    <property type="match status" value="1"/>
</dbReference>
<dbReference type="FunFam" id="3.30.360.10:FF:000001">
    <property type="entry name" value="Glyceraldehyde-3-phosphate dehydrogenase"/>
    <property type="match status" value="1"/>
</dbReference>
<dbReference type="FunFam" id="3.40.50.720:FF:000266">
    <property type="entry name" value="Glyceraldehyde-3-phosphate dehydrogenase"/>
    <property type="match status" value="1"/>
</dbReference>
<dbReference type="Gene3D" id="3.30.360.10">
    <property type="entry name" value="Dihydrodipicolinate Reductase, domain 2"/>
    <property type="match status" value="1"/>
</dbReference>
<dbReference type="Gene3D" id="3.40.50.720">
    <property type="entry name" value="NAD(P)-binding Rossmann-like Domain"/>
    <property type="match status" value="1"/>
</dbReference>
<dbReference type="InterPro" id="IPR020831">
    <property type="entry name" value="GlycerAld/Erythrose_P_DH"/>
</dbReference>
<dbReference type="InterPro" id="IPR020830">
    <property type="entry name" value="GlycerAld_3-P_DH_AS"/>
</dbReference>
<dbReference type="InterPro" id="IPR020829">
    <property type="entry name" value="GlycerAld_3-P_DH_cat"/>
</dbReference>
<dbReference type="InterPro" id="IPR020828">
    <property type="entry name" value="GlycerAld_3-P_DH_NAD(P)-bd"/>
</dbReference>
<dbReference type="InterPro" id="IPR006424">
    <property type="entry name" value="Glyceraldehyde-3-P_DH_1"/>
</dbReference>
<dbReference type="InterPro" id="IPR036291">
    <property type="entry name" value="NAD(P)-bd_dom_sf"/>
</dbReference>
<dbReference type="NCBIfam" id="TIGR01534">
    <property type="entry name" value="GAPDH-I"/>
    <property type="match status" value="1"/>
</dbReference>
<dbReference type="PANTHER" id="PTHR10836">
    <property type="entry name" value="GLYCERALDEHYDE 3-PHOSPHATE DEHYDROGENASE"/>
    <property type="match status" value="1"/>
</dbReference>
<dbReference type="PANTHER" id="PTHR10836:SF76">
    <property type="entry name" value="GLYCERALDEHYDE-3-PHOSPHATE DEHYDROGENASE-RELATED"/>
    <property type="match status" value="1"/>
</dbReference>
<dbReference type="Pfam" id="PF02800">
    <property type="entry name" value="Gp_dh_C"/>
    <property type="match status" value="1"/>
</dbReference>
<dbReference type="Pfam" id="PF00044">
    <property type="entry name" value="Gp_dh_N"/>
    <property type="match status" value="1"/>
</dbReference>
<dbReference type="PIRSF" id="PIRSF000149">
    <property type="entry name" value="GAP_DH"/>
    <property type="match status" value="1"/>
</dbReference>
<dbReference type="PRINTS" id="PR00078">
    <property type="entry name" value="G3PDHDRGNASE"/>
</dbReference>
<dbReference type="SMART" id="SM00846">
    <property type="entry name" value="Gp_dh_N"/>
    <property type="match status" value="1"/>
</dbReference>
<dbReference type="SUPFAM" id="SSF55347">
    <property type="entry name" value="Glyceraldehyde-3-phosphate dehydrogenase-like, C-terminal domain"/>
    <property type="match status" value="1"/>
</dbReference>
<dbReference type="SUPFAM" id="SSF51735">
    <property type="entry name" value="NAD(P)-binding Rossmann-fold domains"/>
    <property type="match status" value="1"/>
</dbReference>
<dbReference type="PROSITE" id="PS00071">
    <property type="entry name" value="GAPDH"/>
    <property type="match status" value="1"/>
</dbReference>
<sequence length="341" mass="36459">MTKPSVGINGFGRIGRLVLRAAVEKDSVNVVAVNDPFISIDYMVYLFQYDSTHGRFKGTVAHEGDYLLVAKEGKSQHKIKVYNSRDPAEIQWGASGADYVVESTGVFTTIEKANAHLKGGAKKVIISAPSADAPMFVVGVNHEKYDHANDHIISNASCTTNCLAPLAKVINDNFGIIEGLMTTVHAVTATQKTVDGPSGKLWRDGRGAGQNIIPASTGAAKAVGKVIPELNGKLTGMAFRVPTPDVSVVDLTARLEKPASLDDIKKVIKAAADGPMKGILAYTEDQVVSTDFVSDTNSSIFDAGASISLNPHFVKLVSWYDNEFGYSNRVVDLISYIATKA</sequence>
<evidence type="ECO:0000250" key="1"/>
<evidence type="ECO:0000255" key="2">
    <source>
        <dbReference type="PROSITE-ProRule" id="PRU10009"/>
    </source>
</evidence>
<evidence type="ECO:0000305" key="3"/>
<proteinExistence type="inferred from homology"/>
<organism>
    <name type="scientific">Caenorhabditis elegans</name>
    <dbReference type="NCBI Taxonomy" id="6239"/>
    <lineage>
        <taxon>Eukaryota</taxon>
        <taxon>Metazoa</taxon>
        <taxon>Ecdysozoa</taxon>
        <taxon>Nematoda</taxon>
        <taxon>Chromadorea</taxon>
        <taxon>Rhabditida</taxon>
        <taxon>Rhabditina</taxon>
        <taxon>Rhabditomorpha</taxon>
        <taxon>Rhabditoidea</taxon>
        <taxon>Rhabditidae</taxon>
        <taxon>Peloderinae</taxon>
        <taxon>Caenorhabditis</taxon>
    </lineage>
</organism>
<protein>
    <recommendedName>
        <fullName>Glyceraldehyde-3-phosphate dehydrogenase 3</fullName>
        <shortName>GAPDH-3</shortName>
        <ecNumber>1.2.1.12</ecNumber>
    </recommendedName>
</protein>
<gene>
    <name type="primary">gpd-3</name>
    <name type="ORF">K10B3.7</name>
</gene>
<comment type="catalytic activity">
    <reaction evidence="2">
        <text>D-glyceraldehyde 3-phosphate + phosphate + NAD(+) = (2R)-3-phospho-glyceroyl phosphate + NADH + H(+)</text>
        <dbReference type="Rhea" id="RHEA:10300"/>
        <dbReference type="ChEBI" id="CHEBI:15378"/>
        <dbReference type="ChEBI" id="CHEBI:43474"/>
        <dbReference type="ChEBI" id="CHEBI:57540"/>
        <dbReference type="ChEBI" id="CHEBI:57604"/>
        <dbReference type="ChEBI" id="CHEBI:57945"/>
        <dbReference type="ChEBI" id="CHEBI:59776"/>
        <dbReference type="EC" id="1.2.1.12"/>
    </reaction>
</comment>
<comment type="pathway">
    <text>Carbohydrate degradation; glycolysis; pyruvate from D-glyceraldehyde 3-phosphate: step 1/5.</text>
</comment>
<comment type="subunit">
    <text>Homotetramer.</text>
</comment>
<comment type="subcellular location">
    <subcellularLocation>
        <location>Cytoplasm</location>
    </subcellularLocation>
</comment>
<comment type="miscellaneous">
    <text>There are four nearly identical glyceraldehyde 3-phosphate dehydrogenases in Caenorhabditis elegans.</text>
</comment>
<comment type="similarity">
    <text evidence="3">Belongs to the glyceraldehyde-3-phosphate dehydrogenase family.</text>
</comment>
<name>G3P3_CAEEL</name>
<keyword id="KW-0963">Cytoplasm</keyword>
<keyword id="KW-0324">Glycolysis</keyword>
<keyword id="KW-0520">NAD</keyword>
<keyword id="KW-0560">Oxidoreductase</keyword>
<keyword id="KW-1185">Reference proteome</keyword>
<feature type="chain" id="PRO_0000145512" description="Glyceraldehyde-3-phosphate dehydrogenase 3">
    <location>
        <begin position="1"/>
        <end position="341"/>
    </location>
</feature>
<feature type="active site" description="Nucleophile" evidence="2">
    <location>
        <position position="158"/>
    </location>
</feature>
<feature type="binding site" evidence="1">
    <location>
        <begin position="13"/>
        <end position="14"/>
    </location>
    <ligand>
        <name>NAD(+)</name>
        <dbReference type="ChEBI" id="CHEBI:57540"/>
    </ligand>
</feature>
<feature type="binding site" evidence="1">
    <location>
        <position position="35"/>
    </location>
    <ligand>
        <name>NAD(+)</name>
        <dbReference type="ChEBI" id="CHEBI:57540"/>
    </ligand>
</feature>
<feature type="binding site" evidence="1">
    <location>
        <position position="85"/>
    </location>
    <ligand>
        <name>NAD(+)</name>
        <dbReference type="ChEBI" id="CHEBI:57540"/>
    </ligand>
</feature>
<feature type="binding site" evidence="1">
    <location>
        <begin position="157"/>
        <end position="159"/>
    </location>
    <ligand>
        <name>D-glyceraldehyde 3-phosphate</name>
        <dbReference type="ChEBI" id="CHEBI:59776"/>
    </ligand>
</feature>
<feature type="binding site" evidence="1">
    <location>
        <position position="188"/>
    </location>
    <ligand>
        <name>D-glyceraldehyde 3-phosphate</name>
        <dbReference type="ChEBI" id="CHEBI:59776"/>
    </ligand>
</feature>
<feature type="binding site" evidence="1">
    <location>
        <begin position="217"/>
        <end position="218"/>
    </location>
    <ligand>
        <name>D-glyceraldehyde 3-phosphate</name>
        <dbReference type="ChEBI" id="CHEBI:59776"/>
    </ligand>
</feature>
<feature type="binding site" evidence="1">
    <location>
        <position position="240"/>
    </location>
    <ligand>
        <name>D-glyceraldehyde 3-phosphate</name>
        <dbReference type="ChEBI" id="CHEBI:59776"/>
    </ligand>
</feature>
<feature type="binding site" evidence="1">
    <location>
        <position position="322"/>
    </location>
    <ligand>
        <name>NAD(+)</name>
        <dbReference type="ChEBI" id="CHEBI:57540"/>
    </ligand>
</feature>
<feature type="site" description="Activates thiol group during catalysis" evidence="1">
    <location>
        <position position="185"/>
    </location>
</feature>